<proteinExistence type="inferred from homology"/>
<feature type="transit peptide" description="Mitochondrion" evidence="2">
    <location>
        <begin position="1"/>
        <end position="15"/>
    </location>
</feature>
<feature type="chain" id="PRO_0000405631" description="ATPase expression protein 2, mitochondrial">
    <location>
        <begin position="16"/>
        <end position="518"/>
    </location>
</feature>
<evidence type="ECO:0000250" key="1"/>
<evidence type="ECO:0000255" key="2"/>
<evidence type="ECO:0000305" key="3"/>
<reference key="1">
    <citation type="journal article" date="2004" name="Nature">
        <title>Genome evolution in yeasts.</title>
        <authorList>
            <person name="Dujon B."/>
            <person name="Sherman D."/>
            <person name="Fischer G."/>
            <person name="Durrens P."/>
            <person name="Casaregola S."/>
            <person name="Lafontaine I."/>
            <person name="de Montigny J."/>
            <person name="Marck C."/>
            <person name="Neuveglise C."/>
            <person name="Talla E."/>
            <person name="Goffard N."/>
            <person name="Frangeul L."/>
            <person name="Aigle M."/>
            <person name="Anthouard V."/>
            <person name="Babour A."/>
            <person name="Barbe V."/>
            <person name="Barnay S."/>
            <person name="Blanchin S."/>
            <person name="Beckerich J.-M."/>
            <person name="Beyne E."/>
            <person name="Bleykasten C."/>
            <person name="Boisrame A."/>
            <person name="Boyer J."/>
            <person name="Cattolico L."/>
            <person name="Confanioleri F."/>
            <person name="de Daruvar A."/>
            <person name="Despons L."/>
            <person name="Fabre E."/>
            <person name="Fairhead C."/>
            <person name="Ferry-Dumazet H."/>
            <person name="Groppi A."/>
            <person name="Hantraye F."/>
            <person name="Hennequin C."/>
            <person name="Jauniaux N."/>
            <person name="Joyet P."/>
            <person name="Kachouri R."/>
            <person name="Kerrest A."/>
            <person name="Koszul R."/>
            <person name="Lemaire M."/>
            <person name="Lesur I."/>
            <person name="Ma L."/>
            <person name="Muller H."/>
            <person name="Nicaud J.-M."/>
            <person name="Nikolski M."/>
            <person name="Oztas S."/>
            <person name="Ozier-Kalogeropoulos O."/>
            <person name="Pellenz S."/>
            <person name="Potier S."/>
            <person name="Richard G.-F."/>
            <person name="Straub M.-L."/>
            <person name="Suleau A."/>
            <person name="Swennen D."/>
            <person name="Tekaia F."/>
            <person name="Wesolowski-Louvel M."/>
            <person name="Westhof E."/>
            <person name="Wirth B."/>
            <person name="Zeniou-Meyer M."/>
            <person name="Zivanovic Y."/>
            <person name="Bolotin-Fukuhara M."/>
            <person name="Thierry A."/>
            <person name="Bouchier C."/>
            <person name="Caudron B."/>
            <person name="Scarpelli C."/>
            <person name="Gaillardin C."/>
            <person name="Weissenbach J."/>
            <person name="Wincker P."/>
            <person name="Souciet J.-L."/>
        </authorList>
    </citation>
    <scope>NUCLEOTIDE SEQUENCE [LARGE SCALE GENOMIC DNA]</scope>
    <source>
        <strain>ATCC 8585 / CBS 2359 / DSM 70799 / NBRC 1267 / NRRL Y-1140 / WM37</strain>
    </source>
</reference>
<accession>Q6CSF8</accession>
<gene>
    <name type="primary">AEP2</name>
    <name type="ordered locus">KLLA0D01408g</name>
</gene>
<name>AEP2_KLULA</name>
<sequence>MLKKSRVLGKIPIPYLIKGSSCFYSTVVTSAPITLEDSLQSILSDIQDGSNIVTPNKPNTNLLTSKQPIKALKHLQWKTNLRVKKTTRLLKYSNEKLTPEDYSVFVNQLMDVYSKDIELLNKTEVWKSLYHIYRVFVVNAVDDGNAMVLYDLNQFVRMFINLNDLPLARNVFQLILKNSKNGEIPKDVQTICMYLRLYCGALSELWTTQTSRNFYQDLIGSLSGSNASSIRIPSHIAYPTIGVPQFQLLLRKLVEDPEYSKLRNTEMDSLIIQALGHYKEVPFLKQYISIFYGIDENVTITETHPGIKKLTPDSQLLKSVISAYGHNNNITSGMTVIGSFMEKYPEMNLDKSFWRTTIYWSLREWNKYKDSKGSQPKKAWNLMLNWYATIGKAVPFDQKIMLYRLSFLKSRKDHNAAIRDVQQVFKRIFIKTEKNTFIVERLVLYAYQRFIIKNLVNQNENAKCVDFINEWRIDFENGRYLERYFKELTHPKNESDEQKKLNDEDDDYNFPLFGTNIL</sequence>
<keyword id="KW-0496">Mitochondrion</keyword>
<keyword id="KW-1185">Reference proteome</keyword>
<keyword id="KW-0694">RNA-binding</keyword>
<keyword id="KW-0809">Transit peptide</keyword>
<keyword id="KW-0810">Translation regulation</keyword>
<protein>
    <recommendedName>
        <fullName>ATPase expression protein 2, mitochondrial</fullName>
    </recommendedName>
</protein>
<dbReference type="EMBL" id="CR382124">
    <property type="protein sequence ID" value="CAH00227.1"/>
    <property type="molecule type" value="Genomic_DNA"/>
</dbReference>
<dbReference type="RefSeq" id="XP_453131.1">
    <property type="nucleotide sequence ID" value="XM_453131.1"/>
</dbReference>
<dbReference type="FunCoup" id="Q6CSF8">
    <property type="interactions" value="53"/>
</dbReference>
<dbReference type="STRING" id="284590.Q6CSF8"/>
<dbReference type="PaxDb" id="284590-Q6CSF8"/>
<dbReference type="KEGG" id="kla:KLLA0_D01408g"/>
<dbReference type="eggNOG" id="ENOG502RX9I">
    <property type="taxonomic scope" value="Eukaryota"/>
</dbReference>
<dbReference type="HOGENOM" id="CLU_035070_0_0_1"/>
<dbReference type="InParanoid" id="Q6CSF8"/>
<dbReference type="OMA" id="LQLRCGA"/>
<dbReference type="Proteomes" id="UP000000598">
    <property type="component" value="Chromosome D"/>
</dbReference>
<dbReference type="GO" id="GO:0005739">
    <property type="term" value="C:mitochondrion"/>
    <property type="evidence" value="ECO:0007669"/>
    <property type="project" value="UniProtKB-SubCell"/>
</dbReference>
<dbReference type="GO" id="GO:0003723">
    <property type="term" value="F:RNA binding"/>
    <property type="evidence" value="ECO:0007669"/>
    <property type="project" value="UniProtKB-KW"/>
</dbReference>
<dbReference type="GO" id="GO:0006417">
    <property type="term" value="P:regulation of translation"/>
    <property type="evidence" value="ECO:0007669"/>
    <property type="project" value="UniProtKB-KW"/>
</dbReference>
<dbReference type="InterPro" id="IPR024319">
    <property type="entry name" value="ATPase_expression_mit"/>
</dbReference>
<dbReference type="Pfam" id="PF12921">
    <property type="entry name" value="ATP13"/>
    <property type="match status" value="1"/>
</dbReference>
<comment type="function">
    <text evidence="1">Required for translation of the mitochondrial OLI1 transcript coding for the mitochondrial ATP synthase subunit 9.</text>
</comment>
<comment type="subunit">
    <text evidence="1">Binds to the 5'UTR of the OLI1 mRNA.</text>
</comment>
<comment type="subcellular location">
    <subcellularLocation>
        <location evidence="1">Mitochondrion</location>
    </subcellularLocation>
</comment>
<comment type="similarity">
    <text evidence="3">Belongs to the AEP2 family.</text>
</comment>
<organism>
    <name type="scientific">Kluyveromyces lactis (strain ATCC 8585 / CBS 2359 / DSM 70799 / NBRC 1267 / NRRL Y-1140 / WM37)</name>
    <name type="common">Yeast</name>
    <name type="synonym">Candida sphaerica</name>
    <dbReference type="NCBI Taxonomy" id="284590"/>
    <lineage>
        <taxon>Eukaryota</taxon>
        <taxon>Fungi</taxon>
        <taxon>Dikarya</taxon>
        <taxon>Ascomycota</taxon>
        <taxon>Saccharomycotina</taxon>
        <taxon>Saccharomycetes</taxon>
        <taxon>Saccharomycetales</taxon>
        <taxon>Saccharomycetaceae</taxon>
        <taxon>Kluyveromyces</taxon>
    </lineage>
</organism>